<evidence type="ECO:0000250" key="1">
    <source>
        <dbReference type="UniProtKB" id="Q8J2Q6"/>
    </source>
</evidence>
<evidence type="ECO:0000250" key="2">
    <source>
        <dbReference type="UniProtKB" id="Q8J2Q9"/>
    </source>
</evidence>
<evidence type="ECO:0000255" key="3">
    <source>
        <dbReference type="PROSITE-ProRule" id="PRU00258"/>
    </source>
</evidence>
<evidence type="ECO:0000269" key="4">
    <source>
    </source>
</evidence>
<evidence type="ECO:0000269" key="5">
    <source>
    </source>
</evidence>
<evidence type="ECO:0000269" key="6">
    <source>
    </source>
</evidence>
<evidence type="ECO:0000269" key="7">
    <source ref="5"/>
</evidence>
<evidence type="ECO:0000303" key="8">
    <source ref="1"/>
</evidence>
<evidence type="ECO:0000305" key="9"/>
<evidence type="ECO:0000305" key="10">
    <source>
    </source>
</evidence>
<accession>A0A3G9H9H8</accession>
<organism>
    <name type="scientific">Alternaria alternata</name>
    <name type="common">Alternaria rot fungus</name>
    <name type="synonym">Torula alternata</name>
    <dbReference type="NCBI Taxonomy" id="5599"/>
    <lineage>
        <taxon>Eukaryota</taxon>
        <taxon>Fungi</taxon>
        <taxon>Dikarya</taxon>
        <taxon>Ascomycota</taxon>
        <taxon>Pezizomycotina</taxon>
        <taxon>Dothideomycetes</taxon>
        <taxon>Pleosporomycetidae</taxon>
        <taxon>Pleosporales</taxon>
        <taxon>Pleosporineae</taxon>
        <taxon>Pleosporaceae</taxon>
        <taxon>Alternaria</taxon>
        <taxon>Alternaria sect. Alternaria</taxon>
        <taxon>Alternaria alternata complex</taxon>
    </lineage>
</organism>
<proteinExistence type="inferred from homology"/>
<reference key="1">
    <citation type="submission" date="2014-06" db="EMBL/GenBank/DDBJ databases">
        <title>AAL-toxin biosynthetic genes cluster in the tomato pathotype of Alternaria alternata.</title>
        <authorList>
            <person name="Akagi Y."/>
            <person name="Akamatsu H."/>
            <person name="Takao K."/>
            <person name="Tsuge T."/>
            <person name="Kodama M."/>
        </authorList>
    </citation>
    <scope>NUCLEOTIDE SEQUENCE [GENOMIC DNA]</scope>
    <source>
        <strain>As-27</strain>
    </source>
</reference>
<reference key="2">
    <citation type="journal article" date="2008" name="J. Nat. Prod.">
        <title>Functional complementation of fumonisin biosynthesis in FUM1-disrupted fusarium verticillioides by the AAL-toxin polyketide synthase gene ALT1 from Alternaria alternata f. sp. Lycopersici.</title>
        <authorList>
            <person name="Zhu X."/>
            <person name="Vogeler C."/>
            <person name="Du L."/>
        </authorList>
    </citation>
    <scope>FUNCTION</scope>
</reference>
<reference key="3">
    <citation type="journal article" date="2009" name="Eukaryot. Cell">
        <title>Horizontal chromosome transfer, a mechanism for the evolution and differentiation of a plant-pathogenic fungus.</title>
        <authorList>
            <person name="Akagi Y."/>
            <person name="Akamatsu H."/>
            <person name="Otani H."/>
            <person name="Kodama M."/>
        </authorList>
    </citation>
    <scope>FUNCTION</scope>
</reference>
<reference key="4">
    <citation type="journal article" date="2009" name="J. Nat. Prod.">
        <title>Introduction of the AAL-toxin polyketide synthase gene ALT1 into FUM1-disrupted Fusarium verticillioides produces metabolites with the fumonisin methylation pattern.</title>
        <authorList>
            <person name="Li Y."/>
            <person name="Shen Y."/>
            <person name="Zhu X."/>
            <person name="Du L."/>
        </authorList>
    </citation>
    <scope>FUNCTION</scope>
</reference>
<reference key="5">
    <citation type="journal article" date="2012" name="J. Plant Pathol. Microbiol.">
        <title>Functional analysis of the ceramide synthase gene ALT7, a homolog of the disease resistance gene Asc1, in the plant pathogen Alternaria alternata.</title>
        <authorList>
            <person name="Kheder A.A."/>
            <person name="Akagi Y."/>
            <person name="Tsuge T."/>
            <person name="Kodama M."/>
        </authorList>
    </citation>
    <scope>FUNCTION</scope>
</reference>
<keyword id="KW-0436">Ligase</keyword>
<keyword id="KW-0596">Phosphopantetheine</keyword>
<keyword id="KW-0597">Phosphoprotein</keyword>
<protein>
    <recommendedName>
        <fullName evidence="2">Nonribosomal peptide synthetase ALT12</fullName>
        <ecNumber evidence="1">6.3.2.-</ecNumber>
    </recommendedName>
    <alternativeName>
        <fullName evidence="8">AAL-toxin biosynthesis cluster protein 12</fullName>
    </alternativeName>
</protein>
<name>ALT12_ALTAL</name>
<dbReference type="EC" id="6.3.2.-" evidence="1"/>
<dbReference type="EMBL" id="AB969680">
    <property type="protein sequence ID" value="BBG74275.1"/>
    <property type="status" value="ALT_SEQ"/>
    <property type="molecule type" value="Genomic_DNA"/>
</dbReference>
<dbReference type="EMBL" id="AB969680">
    <property type="protein sequence ID" value="BBG74283.1"/>
    <property type="status" value="ALT_SEQ"/>
    <property type="molecule type" value="Genomic_DNA"/>
</dbReference>
<dbReference type="SMR" id="A0A3G9H9H8"/>
<dbReference type="GO" id="GO:0005737">
    <property type="term" value="C:cytoplasm"/>
    <property type="evidence" value="ECO:0007669"/>
    <property type="project" value="TreeGrafter"/>
</dbReference>
<dbReference type="GO" id="GO:0016874">
    <property type="term" value="F:ligase activity"/>
    <property type="evidence" value="ECO:0007669"/>
    <property type="project" value="UniProtKB-KW"/>
</dbReference>
<dbReference type="GO" id="GO:0031177">
    <property type="term" value="F:phosphopantetheine binding"/>
    <property type="evidence" value="ECO:0007669"/>
    <property type="project" value="TreeGrafter"/>
</dbReference>
<dbReference type="GO" id="GO:0043041">
    <property type="term" value="P:amino acid activation for nonribosomal peptide biosynthetic process"/>
    <property type="evidence" value="ECO:0007669"/>
    <property type="project" value="TreeGrafter"/>
</dbReference>
<dbReference type="GO" id="GO:0044550">
    <property type="term" value="P:secondary metabolite biosynthetic process"/>
    <property type="evidence" value="ECO:0007669"/>
    <property type="project" value="TreeGrafter"/>
</dbReference>
<dbReference type="Gene3D" id="1.10.1200.10">
    <property type="entry name" value="ACP-like"/>
    <property type="match status" value="1"/>
</dbReference>
<dbReference type="Gene3D" id="3.30.559.10">
    <property type="entry name" value="Chloramphenicol acetyltransferase-like domain"/>
    <property type="match status" value="1"/>
</dbReference>
<dbReference type="Gene3D" id="3.30.559.30">
    <property type="entry name" value="Nonribosomal peptide synthetase, condensation domain"/>
    <property type="match status" value="1"/>
</dbReference>
<dbReference type="InterPro" id="IPR036736">
    <property type="entry name" value="ACP-like_sf"/>
</dbReference>
<dbReference type="InterPro" id="IPR023213">
    <property type="entry name" value="CAT-like_dom_sf"/>
</dbReference>
<dbReference type="InterPro" id="IPR001242">
    <property type="entry name" value="Condensatn"/>
</dbReference>
<dbReference type="InterPro" id="IPR009081">
    <property type="entry name" value="PP-bd_ACP"/>
</dbReference>
<dbReference type="PANTHER" id="PTHR45527">
    <property type="entry name" value="NONRIBOSOMAL PEPTIDE SYNTHETASE"/>
    <property type="match status" value="1"/>
</dbReference>
<dbReference type="PANTHER" id="PTHR45527:SF11">
    <property type="entry name" value="NONRIBOSOMAL PEPTIDE SYNTHETASE 5"/>
    <property type="match status" value="1"/>
</dbReference>
<dbReference type="Pfam" id="PF00668">
    <property type="entry name" value="Condensation"/>
    <property type="match status" value="1"/>
</dbReference>
<dbReference type="Pfam" id="PF00550">
    <property type="entry name" value="PP-binding"/>
    <property type="match status" value="1"/>
</dbReference>
<dbReference type="SUPFAM" id="SSF47336">
    <property type="entry name" value="ACP-like"/>
    <property type="match status" value="1"/>
</dbReference>
<dbReference type="SUPFAM" id="SSF52777">
    <property type="entry name" value="CoA-dependent acyltransferases"/>
    <property type="match status" value="2"/>
</dbReference>
<dbReference type="PROSITE" id="PS50075">
    <property type="entry name" value="CARRIER"/>
    <property type="match status" value="1"/>
</dbReference>
<comment type="function">
    <text evidence="4 5 6 7 10">Nonribosomal peptide synthetase; part of the gene cluster that mediates the biosynthesis of the host-selective toxins (HSTs) AAL-toxins, sphinganine-analog mycotoxins responsible for Alternaria stem canker on tomato by the tomato pathotype (PubMed:18435561, PubMed:19449880, PubMed:19749175). The biosynthesis starts with the polyketide synthase ALT1-catalyzed C-16 carbon chain assembly from one starter acetyl-CoA unit with malonyl-CoA extender units (PubMed:18435561, PubMed:19449880). ALT1 also selectively transfers methyl groups at the first and the third cycle of chain elongation for AAL toxin (PubMed:19449880). The C-16 polyketide chain is released from the enzyme by a nucleophilic attack of a carbanion, which is derived from R-carbon of glycin by decarboxylation, on the carbonyl carbon of polyketide acyl chain (Probable). This step is probably catalyzed by a pyridoxal 5'-phosphate-dependent aminoacyl transferase ALT4 (Probable). The respective functions of the other enzymes encoded by the cluster have still to be elucidated (Probable). The sphingosine N-acyltransferase-like protein ALT7 seems not to act as a resistance/self-tolerance factor against the toxin in the toxin biosynthetic gene cluster, contrary to what is expected (Ref.5).</text>
</comment>
<comment type="pathway">
    <text evidence="2">Mycotoxin biosynthesis.</text>
</comment>
<comment type="domain">
    <text evidence="1">ALT12 encodes a nonribosomal peptide synthetase containing two domains, a peptidyl carrier protein domain and a condensation domain.</text>
</comment>
<comment type="miscellaneous">
    <text evidence="6">Gene clusters encoding host-selective toxins (HSTs) are localized on conditionally dispensable chromosomes (CDCs), also called supernumerary chromosomes, where they are present in multiple copies. The CDCs are not essential for saprophytic growth but controls host-selective pathogenicity.</text>
</comment>
<comment type="similarity">
    <text evidence="9">Belongs to the NRP synthetase family.</text>
</comment>
<comment type="sequence caution" evidence="9">
    <conflict type="erroneous gene model prediction">
        <sequence resource="EMBL-CDS" id="BBG74275"/>
    </conflict>
</comment>
<comment type="sequence caution" evidence="9">
    <conflict type="erroneous gene model prediction">
        <sequence resource="EMBL-CDS" id="BBG74283"/>
    </conflict>
</comment>
<gene>
    <name evidence="9" type="primary">ALT12</name>
    <name evidence="8" type="synonym">ALT12a</name>
    <name evidence="8" type="synonym">ALT12b</name>
</gene>
<sequence>MASLEHMKRIWGEVLGIEPDEIGLDENFVDLGGDSVGTKALQLLGEVASYNVQIDLETFTNTGTIQTLWEAMNDTQTRNVHSMDGRDYNTDSEGLDVVEAASASIVTKTDTDNDDLALEQARLVQDNVLCVAPISPVQGFFLDLGLAGQIGLINYIFEVEGSDLKHGLAHVTNLLESKNPVFRTLIEKTKESGFVQILVAKTRSSWFYPSDLRLYLEKTMTQKFELGKPAVQYALVMEDAAHEGRNFFVISMHHTHCDAFSRFLIGKEISQILESPSYYARSENIERPWFGNYVKHVQQKATDDKASLFWDAYMCGANLANIYPLHRATLNGEFDGAIIEKIQAPVATRIADGSPRNSTQVILAAWAIALANLSGLRDITFGLCRHGRSSSSFRDVRRLMGPLVNVLPFRVSLICNEEPAPALLQRIQNEITSTNKHEHGFSPCIFPSTDGRPWVQSLVDLKSELHGMGNGPSARSDHLAISKMVPRPDLDTYEMKSHWAVLLSIRQHRNVFQVSMYYQKPLLAEGKAVVLFENFRACIQALSTGQNSVGELLE</sequence>
<feature type="chain" id="PRO_0000449864" description="Nonribosomal peptide synthetase ALT12">
    <location>
        <begin position="1"/>
        <end position="554"/>
    </location>
</feature>
<feature type="domain" description="Carrier" evidence="3">
    <location>
        <begin position="1"/>
        <end position="76"/>
    </location>
</feature>
<feature type="region of interest" description="Condensation" evidence="1">
    <location>
        <begin position="124"/>
        <end position="434"/>
    </location>
</feature>
<feature type="modified residue" description="O-(pantetheine 4'-phosphoryl)serine" evidence="3">
    <location>
        <position position="35"/>
    </location>
</feature>